<keyword id="KW-0186">Copper</keyword>
<keyword id="KW-0187">Copper transport</keyword>
<keyword id="KW-0903">Direct protein sequencing</keyword>
<keyword id="KW-1015">Disulfide bond</keyword>
<keyword id="KW-0325">Glycoprotein</keyword>
<keyword id="KW-0406">Ion transport</keyword>
<keyword id="KW-0472">Membrane</keyword>
<keyword id="KW-0479">Metal-binding</keyword>
<keyword id="KW-0560">Oxidoreductase</keyword>
<keyword id="KW-0677">Repeat</keyword>
<keyword id="KW-0732">Signal</keyword>
<keyword id="KW-0812">Transmembrane</keyword>
<keyword id="KW-1133">Transmembrane helix</keyword>
<keyword id="KW-0813">Transport</keyword>
<name>HEPHL_ACRMI</name>
<feature type="signal peptide" evidence="3">
    <location>
        <begin position="1"/>
        <end position="26"/>
    </location>
</feature>
<feature type="chain" id="PRO_0000429546" description="Hephaestin-like protein" evidence="3">
    <location>
        <begin position="27"/>
        <end position="1114"/>
    </location>
</feature>
<feature type="topological domain" description="Extracellular" evidence="3 5">
    <location>
        <begin position="27"/>
        <end position="1091"/>
    </location>
</feature>
<feature type="transmembrane region" description="Helical" evidence="3">
    <location>
        <begin position="1092"/>
        <end position="1112"/>
    </location>
</feature>
<feature type="topological domain" description="Cytoplasmic" evidence="3">
    <location>
        <begin position="1113"/>
        <end position="1114"/>
    </location>
</feature>
<feature type="domain" description="Plastocyanin-like 1" evidence="3">
    <location>
        <begin position="27"/>
        <end position="210"/>
    </location>
</feature>
<feature type="domain" description="Plastocyanin-like 2" evidence="3">
    <location>
        <begin position="218"/>
        <end position="365"/>
    </location>
</feature>
<feature type="domain" description="Plastocyanin-like 3" evidence="3">
    <location>
        <begin position="380"/>
        <end position="562"/>
    </location>
</feature>
<feature type="domain" description="Plastocyanin-like 4" evidence="3">
    <location>
        <begin position="572"/>
        <end position="719"/>
    </location>
</feature>
<feature type="domain" description="Plastocyanin-like 5" evidence="3">
    <location>
        <begin position="730"/>
        <end position="915"/>
    </location>
</feature>
<feature type="domain" description="Plastocyanin-like 6" evidence="3">
    <location>
        <begin position="924"/>
        <end position="1114"/>
    </location>
</feature>
<feature type="binding site" description="type 2 copper site" evidence="1">
    <location>
        <position position="129"/>
    </location>
    <ligand>
        <name>Cu cation</name>
        <dbReference type="ChEBI" id="CHEBI:23378"/>
        <label>1</label>
    </ligand>
</feature>
<feature type="binding site" description="type 3 copper site" evidence="1">
    <location>
        <position position="131"/>
    </location>
    <ligand>
        <name>Cu cation</name>
        <dbReference type="ChEBI" id="CHEBI:23378"/>
        <label>2</label>
    </ligand>
</feature>
<feature type="binding site" description="type 3 copper site" evidence="1">
    <location>
        <position position="189"/>
    </location>
    <ligand>
        <name>Cu cation</name>
        <dbReference type="ChEBI" id="CHEBI:23378"/>
        <label>2</label>
    </ligand>
</feature>
<feature type="binding site" description="type 3 copper site" evidence="1">
    <location>
        <position position="191"/>
    </location>
    <ligand>
        <name>Cu cation</name>
        <dbReference type="ChEBI" id="CHEBI:23378"/>
        <label>3</label>
    </ligand>
</feature>
<feature type="binding site" description="type 1 copper site" evidence="1">
    <location>
        <position position="303"/>
    </location>
    <ligand>
        <name>Cu cation</name>
        <dbReference type="ChEBI" id="CHEBI:23378"/>
        <label>4</label>
    </ligand>
</feature>
<feature type="binding site" description="type 1 copper site" evidence="1">
    <location>
        <position position="346"/>
    </location>
    <ligand>
        <name>Cu cation</name>
        <dbReference type="ChEBI" id="CHEBI:23378"/>
        <label>4</label>
    </ligand>
</feature>
<feature type="binding site" description="type 1 copper site" evidence="1">
    <location>
        <position position="351"/>
    </location>
    <ligand>
        <name>Cu cation</name>
        <dbReference type="ChEBI" id="CHEBI:23378"/>
        <label>4</label>
    </ligand>
</feature>
<feature type="binding site" description="type 1 copper site" evidence="1">
    <location>
        <position position="657"/>
    </location>
    <ligand>
        <name>Cu cation</name>
        <dbReference type="ChEBI" id="CHEBI:23378"/>
        <label>5</label>
    </ligand>
</feature>
<feature type="binding site" description="type 1 copper site" evidence="1">
    <location>
        <position position="700"/>
    </location>
    <ligand>
        <name>Cu cation</name>
        <dbReference type="ChEBI" id="CHEBI:23378"/>
        <label>5</label>
    </ligand>
</feature>
<feature type="binding site" description="type 1 copper site" evidence="1">
    <location>
        <position position="705"/>
    </location>
    <ligand>
        <name>Cu cation</name>
        <dbReference type="ChEBI" id="CHEBI:23378"/>
        <label>5</label>
    </ligand>
</feature>
<feature type="binding site" description="type 1 copper site" evidence="1">
    <location>
        <position position="710"/>
    </location>
    <ligand>
        <name>Cu cation</name>
        <dbReference type="ChEBI" id="CHEBI:23378"/>
        <label>5</label>
    </ligand>
</feature>
<feature type="binding site" description="type 1 copper site" evidence="1">
    <location>
        <position position="1014"/>
    </location>
    <ligand>
        <name>Cu cation</name>
        <dbReference type="ChEBI" id="CHEBI:23378"/>
        <label>6</label>
    </ligand>
</feature>
<feature type="binding site" description="type 2 copper site" evidence="1">
    <location>
        <position position="1017"/>
    </location>
    <ligand>
        <name>Cu cation</name>
        <dbReference type="ChEBI" id="CHEBI:23378"/>
        <label>1</label>
    </ligand>
</feature>
<feature type="binding site" description="type 3 copper site" evidence="1">
    <location>
        <position position="1019"/>
    </location>
    <ligand>
        <name>Cu cation</name>
        <dbReference type="ChEBI" id="CHEBI:23378"/>
        <label>3</label>
    </ligand>
</feature>
<feature type="binding site" description="type 3 copper site" evidence="1">
    <location>
        <position position="1059"/>
    </location>
    <ligand>
        <name>Cu cation</name>
        <dbReference type="ChEBI" id="CHEBI:23378"/>
        <label>3</label>
    </ligand>
</feature>
<feature type="binding site" description="type 1 copper site" evidence="1">
    <location>
        <position position="1060"/>
    </location>
    <ligand>
        <name>Cu cation</name>
        <dbReference type="ChEBI" id="CHEBI:23378"/>
        <label>6</label>
    </ligand>
</feature>
<feature type="binding site" description="type 3 copper site" evidence="1">
    <location>
        <position position="1061"/>
    </location>
    <ligand>
        <name>Cu cation</name>
        <dbReference type="ChEBI" id="CHEBI:23378"/>
        <label>2</label>
    </ligand>
</feature>
<feature type="binding site" description="type 1 copper site" evidence="1">
    <location>
        <position position="1065"/>
    </location>
    <ligand>
        <name>Cu cation</name>
        <dbReference type="ChEBI" id="CHEBI:23378"/>
        <label>6</label>
    </ligand>
</feature>
<feature type="binding site" description="type 1 copper site" evidence="1">
    <location>
        <position position="1070"/>
    </location>
    <ligand>
        <name>Cu cation</name>
        <dbReference type="ChEBI" id="CHEBI:23378"/>
        <label>6</label>
    </ligand>
</feature>
<feature type="glycosylation site" description="N-linked (GlcNAc...) asparagine" evidence="3">
    <location>
        <position position="121"/>
    </location>
</feature>
<feature type="glycosylation site" description="N-linked (GlcNAc...) asparagine" evidence="3">
    <location>
        <position position="236"/>
    </location>
</feature>
<feature type="glycosylation site" description="N-linked (GlcNAc...) asparagine" evidence="3">
    <location>
        <position position="361"/>
    </location>
</feature>
<feature type="glycosylation site" description="N-linked (GlcNAc...) asparagine" evidence="3">
    <location>
        <position position="478"/>
    </location>
</feature>
<feature type="glycosylation site" description="N-linked (GlcNAc...) asparagine" evidence="3">
    <location>
        <position position="489"/>
    </location>
</feature>
<feature type="glycosylation site" description="N-linked (GlcNAc...) asparagine" evidence="3">
    <location>
        <position position="831"/>
    </location>
</feature>
<feature type="glycosylation site" description="N-linked (GlcNAc...) asparagine" evidence="3">
    <location>
        <position position="944"/>
    </location>
</feature>
<feature type="disulfide bond" evidence="2 3">
    <location>
        <begin position="183"/>
        <end position="209"/>
    </location>
</feature>
<feature type="disulfide bond" evidence="2 3">
    <location>
        <begin position="284"/>
        <end position="365"/>
    </location>
</feature>
<feature type="disulfide bond" evidence="2 3">
    <location>
        <begin position="536"/>
        <end position="562"/>
    </location>
</feature>
<feature type="disulfide bond" evidence="2 3">
    <location>
        <begin position="638"/>
        <end position="719"/>
    </location>
</feature>
<feature type="disulfide bond" evidence="2 3">
    <location>
        <begin position="889"/>
        <end position="915"/>
    </location>
</feature>
<reference evidence="6" key="1">
    <citation type="journal article" date="2012" name="Mol. Ecol.">
        <title>Whole transcriptome analysis of the coral Acropora millepora reveals complex responses to CO(2)-driven acidification during the initiation of calcification.</title>
        <authorList>
            <person name="Moya A."/>
            <person name="Huisman L."/>
            <person name="Ball E.E."/>
            <person name="Hayward D.C."/>
            <person name="Grasso L.C."/>
            <person name="Chua C.M."/>
            <person name="Woo H.N."/>
            <person name="Gattuso J.P."/>
            <person name="Foret S."/>
            <person name="Miller D.J."/>
        </authorList>
    </citation>
    <scope>NUCLEOTIDE SEQUENCE [MRNA]</scope>
</reference>
<reference evidence="6" key="2">
    <citation type="journal article" date="2013" name="Mol. Biol. Evol.">
        <title>The skeletal proteome of the coral Acropora millepora: the evolution of calcification by co-option and domain shuffling.</title>
        <authorList>
            <person name="Ramos-Silva P."/>
            <person name="Kaandorp J."/>
            <person name="Huisman L."/>
            <person name="Marie B."/>
            <person name="Zanella-Cleon I."/>
            <person name="Guichard N."/>
            <person name="Miller D.J."/>
            <person name="Marin F."/>
        </authorList>
    </citation>
    <scope>PROTEIN SEQUENCE OF 29-39; 54-68; 82-92; 97-108; 319-336; 431-442; 460-473; 506-532; 765-775; 785-797; 868-876 AND 902-917</scope>
    <scope>TISSUE SPECIFICITY</scope>
    <scope>IDENTIFICATION BY MASS SPECTROMETRY</scope>
</reference>
<proteinExistence type="evidence at protein level"/>
<dbReference type="EC" id="1.-.-.-" evidence="2"/>
<dbReference type="EMBL" id="JT019463">
    <property type="status" value="NOT_ANNOTATED_CDS"/>
    <property type="molecule type" value="mRNA"/>
</dbReference>
<dbReference type="SMR" id="B3EWZ9"/>
<dbReference type="OrthoDB" id="2121828at2759"/>
<dbReference type="GO" id="GO:0005886">
    <property type="term" value="C:plasma membrane"/>
    <property type="evidence" value="ECO:0007669"/>
    <property type="project" value="TreeGrafter"/>
</dbReference>
<dbReference type="GO" id="GO:0005507">
    <property type="term" value="F:copper ion binding"/>
    <property type="evidence" value="ECO:0007669"/>
    <property type="project" value="InterPro"/>
</dbReference>
<dbReference type="GO" id="GO:0016491">
    <property type="term" value="F:oxidoreductase activity"/>
    <property type="evidence" value="ECO:0007669"/>
    <property type="project" value="UniProtKB-KW"/>
</dbReference>
<dbReference type="GO" id="GO:0006825">
    <property type="term" value="P:copper ion transport"/>
    <property type="evidence" value="ECO:0007669"/>
    <property type="project" value="UniProtKB-KW"/>
</dbReference>
<dbReference type="GO" id="GO:0006826">
    <property type="term" value="P:iron ion transport"/>
    <property type="evidence" value="ECO:0007669"/>
    <property type="project" value="TreeGrafter"/>
</dbReference>
<dbReference type="FunFam" id="2.60.40.420:FF:000009">
    <property type="entry name" value="Ceruloplasmin"/>
    <property type="match status" value="1"/>
</dbReference>
<dbReference type="FunFam" id="2.60.40.420:FF:000002">
    <property type="entry name" value="Hephaestin like 1"/>
    <property type="match status" value="2"/>
</dbReference>
<dbReference type="Gene3D" id="2.60.40.420">
    <property type="entry name" value="Cupredoxins - blue copper proteins"/>
    <property type="match status" value="3"/>
</dbReference>
<dbReference type="InterPro" id="IPR011707">
    <property type="entry name" value="Cu-oxidase-like_N"/>
</dbReference>
<dbReference type="InterPro" id="IPR011706">
    <property type="entry name" value="Cu-oxidase_C"/>
</dbReference>
<dbReference type="InterPro" id="IPR045087">
    <property type="entry name" value="Cu-oxidase_fam"/>
</dbReference>
<dbReference type="InterPro" id="IPR033138">
    <property type="entry name" value="Cu_oxidase_CS"/>
</dbReference>
<dbReference type="InterPro" id="IPR002355">
    <property type="entry name" value="Cu_oxidase_Cu_BS"/>
</dbReference>
<dbReference type="InterPro" id="IPR008972">
    <property type="entry name" value="Cupredoxin"/>
</dbReference>
<dbReference type="InterPro" id="IPR024715">
    <property type="entry name" value="Factor_5/8-like"/>
</dbReference>
<dbReference type="PANTHER" id="PTHR11709">
    <property type="entry name" value="MULTI-COPPER OXIDASE"/>
    <property type="match status" value="1"/>
</dbReference>
<dbReference type="PANTHER" id="PTHR11709:SF504">
    <property type="entry name" value="PLASTOCYANIN-LIKE DOMAIN-CONTAINING PROTEIN"/>
    <property type="match status" value="1"/>
</dbReference>
<dbReference type="Pfam" id="PF07731">
    <property type="entry name" value="Cu-oxidase_2"/>
    <property type="match status" value="3"/>
</dbReference>
<dbReference type="Pfam" id="PF07732">
    <property type="entry name" value="Cu-oxidase_3"/>
    <property type="match status" value="3"/>
</dbReference>
<dbReference type="PIRSF" id="PIRSF000354">
    <property type="entry name" value="Factors_V_VIII"/>
    <property type="match status" value="1"/>
</dbReference>
<dbReference type="SUPFAM" id="SSF49503">
    <property type="entry name" value="Cupredoxins"/>
    <property type="match status" value="6"/>
</dbReference>
<dbReference type="PROSITE" id="PS00079">
    <property type="entry name" value="MULTICOPPER_OXIDASE1"/>
    <property type="match status" value="3"/>
</dbReference>
<dbReference type="PROSITE" id="PS00080">
    <property type="entry name" value="MULTICOPPER_OXIDASE2"/>
    <property type="match status" value="1"/>
</dbReference>
<comment type="function">
    <text evidence="2">May function as a ferroxidase and may be involved in copper transport and homeostasis.</text>
</comment>
<comment type="cofactor">
    <cofactor evidence="2">
        <name>Cu cation</name>
        <dbReference type="ChEBI" id="CHEBI:23378"/>
    </cofactor>
    <text evidence="2">Binds 6 Cu cations per monomer.</text>
</comment>
<comment type="subcellular location">
    <subcellularLocation>
        <location evidence="3">Membrane</location>
        <topology evidence="3">Single-pass membrane protein</topology>
    </subcellularLocation>
    <text evidence="3 5">Presence in the organic matrix of the skeleton may be due to shedding of a soluble peptide.</text>
</comment>
<comment type="tissue specificity">
    <text evidence="4">Component of the acid-insoluble and acid-soluble organic matrix of the aragonitic skeleton (at protein level).</text>
</comment>
<comment type="similarity">
    <text evidence="3">Belongs to the multicopper oxidase family.</text>
</comment>
<evidence type="ECO:0000250" key="1">
    <source>
        <dbReference type="UniProtKB" id="P00450"/>
    </source>
</evidence>
<evidence type="ECO:0000250" key="2">
    <source>
        <dbReference type="UniProtKB" id="Q9BQS7"/>
    </source>
</evidence>
<evidence type="ECO:0000255" key="3"/>
<evidence type="ECO:0000269" key="4">
    <source>
    </source>
</evidence>
<evidence type="ECO:0000303" key="5">
    <source>
    </source>
</evidence>
<evidence type="ECO:0000305" key="6"/>
<sequence>MMDRSNAAFVLTACFIFSQLICHVAAITRTYYIAAVEKEWDYAPSGYNKIKGVKLEDDSDATVFATKGAHRIGRIYDKVLYREYEDASFTKEKPHPKYLGFLGPILKGEIGDTIVVHFKNNGSRVYSMHPHGVFYSKDSEGALYEDNTKGKFKKDDKVPPGGTHTYSWHLTQSHAPADQEDKCITWIYHSHVVPSKDINTGLLGIMLICRKGALNQGQQSGVDKEFVALFTVLDENESWLLSKNIERCSDPTRVNPDDEDFKESNKMHAINGYFYGNLPGLDMCYGDSVKWHLAGIGNEVDIHTAYFHGQSFTIDGHRKDVASLLPATFVTASMKALNPGKWMLNCLVNDHYNAGMYTLFNVTKCPGKVGVAPSVSGGKKRTYFIAANEVEWNYGPTGVNGMDGQSLIAPGSDSAVFFAQNAQRIGGTYLKAIYEQYTDARFSTKVPKPEHLGFLGPVIRAEVNDIIEVVFKNNARFNFSIQPHGVFFNKSNEGALYEDGTSRAQKADDNVQPGQTFTYRWTVPEEVGPTKSDAACITWVYHSSVDPVKDTYSGLFGPLLTCKKGTLNNDNTRKDTDKEFVLLFTVTDESESWYHEKNKEMKANAILINDDDEDYKESNKMHGINGFLYANLPGLEMCLGDTISWHVIGLGNEVDMHTAYFYGNTFTHQGSVKDTVSLLPGVFGTLTMTPDNAGDWALVCRTNDHYSAGMQAKYKVNTCNRNPELKTSGKTRDYYIAAFEMEWDYAPTGLDALDGKKLDQSEEAKVFTVTSDKRIGRKYVKAVYREFTNDQFNQQKLRTPAEEHLGILGPMLHAEVGDTIKVVFKNNANRNYSVHPHGLYYSKAHEGSDYNDGTSGADKLDNAIQPGKTYTYIWKVPERAGPGKDGPACATWAYYSDVNPIKDTNSGLIGPLIICKKGKLKEGTEERSDVDREFVLMFTVLDENESWYLDENIKKYCKNPGDKETLKADDDFMESNKMHGINGFVFGNLKGLKMYQDEKVDWLLLGIGNEVDMHTVHFHGQSFLRKQVSYHREDVYDLFPGVFATVEMVPDSTGDWLLHCHVNDHMVAGMETLYSVLDKSLKTTPKPITAASSFVTSSIFIYLSFPVLAMLLKA</sequence>
<organism>
    <name type="scientific">Acropora millepora</name>
    <name type="common">Staghorn coral</name>
    <name type="synonym">Heteropora millepora</name>
    <dbReference type="NCBI Taxonomy" id="45264"/>
    <lineage>
        <taxon>Eukaryota</taxon>
        <taxon>Metazoa</taxon>
        <taxon>Cnidaria</taxon>
        <taxon>Anthozoa</taxon>
        <taxon>Hexacorallia</taxon>
        <taxon>Scleractinia</taxon>
        <taxon>Astrocoeniina</taxon>
        <taxon>Acroporidae</taxon>
        <taxon>Acropora</taxon>
    </lineage>
</organism>
<accession>B3EWZ9</accession>
<protein>
    <recommendedName>
        <fullName evidence="5">Hephaestin-like protein</fullName>
        <ecNumber evidence="2">1.-.-.-</ecNumber>
    </recommendedName>
</protein>